<protein>
    <recommendedName>
        <fullName evidence="5">Endoplasmic reticulum chaperone BIP1</fullName>
        <ecNumber evidence="1">3.6.4.10</ecNumber>
    </recommendedName>
</protein>
<accession>A0A0D1CD96</accession>
<comment type="function">
    <text evidence="2">Probably plays a role in facilitating the assembly of multimeric protein complexes inside the ER (By similarity). Is required for secretory polypeptide translocation (By similarity).</text>
</comment>
<comment type="catalytic activity">
    <reaction evidence="1">
        <text>ATP + H2O = ADP + phosphate + H(+)</text>
        <dbReference type="Rhea" id="RHEA:13065"/>
        <dbReference type="ChEBI" id="CHEBI:15377"/>
        <dbReference type="ChEBI" id="CHEBI:15378"/>
        <dbReference type="ChEBI" id="CHEBI:30616"/>
        <dbReference type="ChEBI" id="CHEBI:43474"/>
        <dbReference type="ChEBI" id="CHEBI:456216"/>
        <dbReference type="EC" id="3.6.4.10"/>
    </reaction>
</comment>
<comment type="subunit">
    <text evidence="4">Interacts with the ER co-chaperonne DNJ1.</text>
</comment>
<comment type="subcellular location">
    <subcellularLocation>
        <location evidence="4">Endoplasmic reticulum lumen</location>
    </subcellularLocation>
</comment>
<comment type="induction">
    <text evidence="4">Expression is increased in the absence of DNJ1.</text>
</comment>
<comment type="similarity">
    <text evidence="6">Belongs to the heat shock protein 70 family.</text>
</comment>
<proteinExistence type="evidence at protein level"/>
<feature type="chain" id="PRO_0000454651" description="Endoplasmic reticulum chaperone BIP1">
    <location>
        <begin position="1"/>
        <end position="660"/>
    </location>
</feature>
<feature type="region of interest" description="Nucleotide-binding (NBD)" evidence="1">
    <location>
        <begin position="131"/>
        <end position="285"/>
    </location>
</feature>
<feature type="region of interest" description="Substrate-binding (SBD)" evidence="1">
    <location>
        <begin position="404"/>
        <end position="504"/>
    </location>
</feature>
<feature type="short sequence motif" description="Prevents secretion from ER" evidence="3">
    <location>
        <begin position="657"/>
        <end position="660"/>
    </location>
</feature>
<feature type="binding site" evidence="1">
    <location>
        <begin position="74"/>
        <end position="77"/>
    </location>
    <ligand>
        <name>ATP</name>
        <dbReference type="ChEBI" id="CHEBI:30616"/>
    </ligand>
</feature>
<feature type="binding site" evidence="1">
    <location>
        <begin position="232"/>
        <end position="234"/>
    </location>
    <ligand>
        <name>ATP</name>
        <dbReference type="ChEBI" id="CHEBI:30616"/>
    </ligand>
</feature>
<feature type="binding site" evidence="1">
    <location>
        <begin position="298"/>
        <end position="305"/>
    </location>
    <ligand>
        <name>ATP</name>
        <dbReference type="ChEBI" id="CHEBI:30616"/>
    </ligand>
</feature>
<feature type="binding site" evidence="1">
    <location>
        <begin position="369"/>
        <end position="372"/>
    </location>
    <ligand>
        <name>ATP</name>
        <dbReference type="ChEBI" id="CHEBI:30616"/>
    </ligand>
</feature>
<organism>
    <name type="scientific">Mycosarcoma maydis</name>
    <name type="common">Corn smut fungus</name>
    <name type="synonym">Ustilago maydis</name>
    <dbReference type="NCBI Taxonomy" id="5270"/>
    <lineage>
        <taxon>Eukaryota</taxon>
        <taxon>Fungi</taxon>
        <taxon>Dikarya</taxon>
        <taxon>Basidiomycota</taxon>
        <taxon>Ustilaginomycotina</taxon>
        <taxon>Ustilaginomycetes</taxon>
        <taxon>Ustilaginales</taxon>
        <taxon>Ustilaginaceae</taxon>
        <taxon>Mycosarcoma</taxon>
    </lineage>
</organism>
<keyword id="KW-0067">ATP-binding</keyword>
<keyword id="KW-0143">Chaperone</keyword>
<keyword id="KW-0256">Endoplasmic reticulum</keyword>
<keyword id="KW-0378">Hydrolase</keyword>
<keyword id="KW-0547">Nucleotide-binding</keyword>
<keyword id="KW-1185">Reference proteome</keyword>
<name>BIP1_MYCMD</name>
<gene>
    <name evidence="5" type="primary">BIP1</name>
    <name type="ORF">UMAG_15034</name>
</gene>
<reference key="1">
    <citation type="journal article" date="2006" name="Nature">
        <title>Insights from the genome of the biotrophic fungal plant pathogen Ustilago maydis.</title>
        <authorList>
            <person name="Kaemper J."/>
            <person name="Kahmann R."/>
            <person name="Boelker M."/>
            <person name="Ma L.-J."/>
            <person name="Brefort T."/>
            <person name="Saville B.J."/>
            <person name="Banuett F."/>
            <person name="Kronstad J.W."/>
            <person name="Gold S.E."/>
            <person name="Mueller O."/>
            <person name="Perlin M.H."/>
            <person name="Woesten H.A.B."/>
            <person name="de Vries R."/>
            <person name="Ruiz-Herrera J."/>
            <person name="Reynaga-Pena C.G."/>
            <person name="Snetselaar K."/>
            <person name="McCann M."/>
            <person name="Perez-Martin J."/>
            <person name="Feldbruegge M."/>
            <person name="Basse C.W."/>
            <person name="Steinberg G."/>
            <person name="Ibeas J.I."/>
            <person name="Holloman W."/>
            <person name="Guzman P."/>
            <person name="Farman M.L."/>
            <person name="Stajich J.E."/>
            <person name="Sentandreu R."/>
            <person name="Gonzalez-Prieto J.M."/>
            <person name="Kennell J.C."/>
            <person name="Molina L."/>
            <person name="Schirawski J."/>
            <person name="Mendoza-Mendoza A."/>
            <person name="Greilinger D."/>
            <person name="Muench K."/>
            <person name="Roessel N."/>
            <person name="Scherer M."/>
            <person name="Vranes M."/>
            <person name="Ladendorf O."/>
            <person name="Vincon V."/>
            <person name="Fuchs U."/>
            <person name="Sandrock B."/>
            <person name="Meng S."/>
            <person name="Ho E.C.H."/>
            <person name="Cahill M.J."/>
            <person name="Boyce K.J."/>
            <person name="Klose J."/>
            <person name="Klosterman S.J."/>
            <person name="Deelstra H.J."/>
            <person name="Ortiz-Castellanos L."/>
            <person name="Li W."/>
            <person name="Sanchez-Alonso P."/>
            <person name="Schreier P.H."/>
            <person name="Haeuser-Hahn I."/>
            <person name="Vaupel M."/>
            <person name="Koopmann E."/>
            <person name="Friedrich G."/>
            <person name="Voss H."/>
            <person name="Schlueter T."/>
            <person name="Margolis J."/>
            <person name="Platt D."/>
            <person name="Swimmer C."/>
            <person name="Gnirke A."/>
            <person name="Chen F."/>
            <person name="Vysotskaia V."/>
            <person name="Mannhaupt G."/>
            <person name="Gueldener U."/>
            <person name="Muensterkoetter M."/>
            <person name="Haase D."/>
            <person name="Oesterheld M."/>
            <person name="Mewes H.-W."/>
            <person name="Mauceli E.W."/>
            <person name="DeCaprio D."/>
            <person name="Wade C.M."/>
            <person name="Butler J."/>
            <person name="Young S.K."/>
            <person name="Jaffe D.B."/>
            <person name="Calvo S.E."/>
            <person name="Nusbaum C."/>
            <person name="Galagan J.E."/>
            <person name="Birren B.W."/>
        </authorList>
    </citation>
    <scope>NUCLEOTIDE SEQUENCE [LARGE SCALE GENOMIC DNA]</scope>
    <source>
        <strain>DSM 14603 / FGSC 9021 / UM521</strain>
    </source>
</reference>
<reference key="2">
    <citation type="submission" date="2014-09" db="EMBL/GenBank/DDBJ databases">
        <authorList>
            <person name="Gueldener U."/>
            <person name="Muensterkoetter M."/>
            <person name="Walter M.C."/>
            <person name="Mannhaupt G."/>
            <person name="Kahmann R."/>
        </authorList>
    </citation>
    <scope>GENOME REANNOTATION</scope>
    <source>
        <strain>DSM 14603 / FGSC 9021 / UM521</strain>
    </source>
</reference>
<reference key="3">
    <citation type="journal article" date="2016" name="New Phytol.">
        <title>A conserved co-chaperone is required for virulence in fungal plant pathogens.</title>
        <authorList>
            <person name="Lo Presti L."/>
            <person name="Lopez Diaz C."/>
            <person name="Turra D."/>
            <person name="Di Pietro A."/>
            <person name="Hampel M."/>
            <person name="Heimel K."/>
            <person name="Kahmann R."/>
        </authorList>
    </citation>
    <scope>SUBCELLULAR LOCATION</scope>
    <scope>INDUCTION</scope>
    <scope>INTERACTION WITH DNJ1</scope>
</reference>
<dbReference type="EC" id="3.6.4.10" evidence="1"/>
<dbReference type="EMBL" id="CM003141">
    <property type="protein sequence ID" value="KIS71057.1"/>
    <property type="molecule type" value="Genomic_DNA"/>
</dbReference>
<dbReference type="RefSeq" id="XP_011387505.1">
    <property type="nucleotide sequence ID" value="XM_011389203.1"/>
</dbReference>
<dbReference type="SMR" id="A0A0D1CD96"/>
<dbReference type="FunCoup" id="A0A0D1CD96">
    <property type="interactions" value="448"/>
</dbReference>
<dbReference type="STRING" id="237631.A0A0D1CD96"/>
<dbReference type="EnsemblFungi" id="KIS71057">
    <property type="protein sequence ID" value="KIS71057"/>
    <property type="gene ID" value="UMAG_15034"/>
</dbReference>
<dbReference type="GeneID" id="23568125"/>
<dbReference type="KEGG" id="uma:UMAG_15034"/>
<dbReference type="VEuPathDB" id="FungiDB:UMAG_15034"/>
<dbReference type="InParanoid" id="A0A0D1CD96"/>
<dbReference type="OrthoDB" id="2401965at2759"/>
<dbReference type="Proteomes" id="UP000000561">
    <property type="component" value="Chromosome 2"/>
</dbReference>
<dbReference type="GO" id="GO:0005737">
    <property type="term" value="C:cytoplasm"/>
    <property type="evidence" value="ECO:0000318"/>
    <property type="project" value="GO_Central"/>
</dbReference>
<dbReference type="GO" id="GO:0034663">
    <property type="term" value="C:endoplasmic reticulum chaperone complex"/>
    <property type="evidence" value="ECO:0000318"/>
    <property type="project" value="GO_Central"/>
</dbReference>
<dbReference type="GO" id="GO:0005788">
    <property type="term" value="C:endoplasmic reticulum lumen"/>
    <property type="evidence" value="ECO:0000318"/>
    <property type="project" value="GO_Central"/>
</dbReference>
<dbReference type="GO" id="GO:0016020">
    <property type="term" value="C:membrane"/>
    <property type="evidence" value="ECO:0000318"/>
    <property type="project" value="GO_Central"/>
</dbReference>
<dbReference type="GO" id="GO:0005634">
    <property type="term" value="C:nucleus"/>
    <property type="evidence" value="ECO:0000318"/>
    <property type="project" value="GO_Central"/>
</dbReference>
<dbReference type="GO" id="GO:0005524">
    <property type="term" value="F:ATP binding"/>
    <property type="evidence" value="ECO:0007669"/>
    <property type="project" value="UniProtKB-KW"/>
</dbReference>
<dbReference type="GO" id="GO:0016887">
    <property type="term" value="F:ATP hydrolysis activity"/>
    <property type="evidence" value="ECO:0000318"/>
    <property type="project" value="GO_Central"/>
</dbReference>
<dbReference type="GO" id="GO:0140662">
    <property type="term" value="F:ATP-dependent protein folding chaperone"/>
    <property type="evidence" value="ECO:0007669"/>
    <property type="project" value="InterPro"/>
</dbReference>
<dbReference type="GO" id="GO:0031072">
    <property type="term" value="F:heat shock protein binding"/>
    <property type="evidence" value="ECO:0000318"/>
    <property type="project" value="GO_Central"/>
</dbReference>
<dbReference type="GO" id="GO:0044183">
    <property type="term" value="F:protein folding chaperone"/>
    <property type="evidence" value="ECO:0000318"/>
    <property type="project" value="GO_Central"/>
</dbReference>
<dbReference type="GO" id="GO:0051085">
    <property type="term" value="P:chaperone cofactor-dependent protein refolding"/>
    <property type="evidence" value="ECO:0000318"/>
    <property type="project" value="GO_Central"/>
</dbReference>
<dbReference type="GO" id="GO:0030968">
    <property type="term" value="P:endoplasmic reticulum unfolded protein response"/>
    <property type="evidence" value="ECO:0000318"/>
    <property type="project" value="GO_Central"/>
</dbReference>
<dbReference type="GO" id="GO:0036503">
    <property type="term" value="P:ERAD pathway"/>
    <property type="evidence" value="ECO:0000318"/>
    <property type="project" value="GO_Central"/>
</dbReference>
<dbReference type="GO" id="GO:0042026">
    <property type="term" value="P:protein refolding"/>
    <property type="evidence" value="ECO:0000318"/>
    <property type="project" value="GO_Central"/>
</dbReference>
<dbReference type="CDD" id="cd10241">
    <property type="entry name" value="ASKHA_NBD_HSP70_BiP"/>
    <property type="match status" value="1"/>
</dbReference>
<dbReference type="FunFam" id="3.30.420.40:FF:000545">
    <property type="entry name" value="Endoplasmic reticulum chaperone BiP"/>
    <property type="match status" value="1"/>
</dbReference>
<dbReference type="FunFam" id="2.60.34.10:FF:000002">
    <property type="entry name" value="Heat shock 70 kDa"/>
    <property type="match status" value="1"/>
</dbReference>
<dbReference type="FunFam" id="3.90.640.10:FF:000002">
    <property type="entry name" value="Heat shock 70 kDa"/>
    <property type="match status" value="1"/>
</dbReference>
<dbReference type="FunFam" id="3.30.30.30:FF:000001">
    <property type="entry name" value="heat shock 70 kDa protein-like"/>
    <property type="match status" value="1"/>
</dbReference>
<dbReference type="FunFam" id="1.20.1270.10:FF:000056">
    <property type="entry name" value="Putative Hsp70 family ATPase KAR2"/>
    <property type="match status" value="1"/>
</dbReference>
<dbReference type="Gene3D" id="1.20.1270.10">
    <property type="match status" value="1"/>
</dbReference>
<dbReference type="Gene3D" id="3.30.30.30">
    <property type="match status" value="1"/>
</dbReference>
<dbReference type="Gene3D" id="3.30.420.40">
    <property type="match status" value="3"/>
</dbReference>
<dbReference type="Gene3D" id="3.90.640.10">
    <property type="entry name" value="Actin, Chain A, domain 4"/>
    <property type="match status" value="1"/>
</dbReference>
<dbReference type="Gene3D" id="2.60.34.10">
    <property type="entry name" value="Substrate Binding Domain Of DNAk, Chain A, domain 1"/>
    <property type="match status" value="1"/>
</dbReference>
<dbReference type="InterPro" id="IPR043129">
    <property type="entry name" value="ATPase_NBD"/>
</dbReference>
<dbReference type="InterPro" id="IPR042050">
    <property type="entry name" value="BIP_NBD"/>
</dbReference>
<dbReference type="InterPro" id="IPR018181">
    <property type="entry name" value="Heat_shock_70_CS"/>
</dbReference>
<dbReference type="InterPro" id="IPR029048">
    <property type="entry name" value="HSP70_C_sf"/>
</dbReference>
<dbReference type="InterPro" id="IPR029047">
    <property type="entry name" value="HSP70_peptide-bd_sf"/>
</dbReference>
<dbReference type="InterPro" id="IPR013126">
    <property type="entry name" value="Hsp_70_fam"/>
</dbReference>
<dbReference type="NCBIfam" id="NF001413">
    <property type="entry name" value="PRK00290.1"/>
    <property type="match status" value="1"/>
</dbReference>
<dbReference type="PANTHER" id="PTHR19375">
    <property type="entry name" value="HEAT SHOCK PROTEIN 70KDA"/>
    <property type="match status" value="1"/>
</dbReference>
<dbReference type="Pfam" id="PF00012">
    <property type="entry name" value="HSP70"/>
    <property type="match status" value="2"/>
</dbReference>
<dbReference type="PRINTS" id="PR00301">
    <property type="entry name" value="HEATSHOCK70"/>
</dbReference>
<dbReference type="SUPFAM" id="SSF53067">
    <property type="entry name" value="Actin-like ATPase domain"/>
    <property type="match status" value="2"/>
</dbReference>
<dbReference type="SUPFAM" id="SSF100934">
    <property type="entry name" value="Heat shock protein 70kD (HSP70), C-terminal subdomain"/>
    <property type="match status" value="1"/>
</dbReference>
<dbReference type="SUPFAM" id="SSF100920">
    <property type="entry name" value="Heat shock protein 70kD (HSP70), peptide-binding domain"/>
    <property type="match status" value="1"/>
</dbReference>
<dbReference type="PROSITE" id="PS00014">
    <property type="entry name" value="ER_TARGET"/>
    <property type="match status" value="1"/>
</dbReference>
<dbReference type="PROSITE" id="PS00297">
    <property type="entry name" value="HSP70_1"/>
    <property type="match status" value="1"/>
</dbReference>
<dbReference type="PROSITE" id="PS00329">
    <property type="entry name" value="HSP70_2"/>
    <property type="match status" value="1"/>
</dbReference>
<dbReference type="PROSITE" id="PS01036">
    <property type="entry name" value="HSP70_3"/>
    <property type="match status" value="1"/>
</dbReference>
<sequence>MVLASRTTALAQRRKAARATGMSRPAFMTIIMAILALLTLSAFMSPASSAGGMGVAAAADKRSEYGTVIGIDLGTTYSCVGAQVNGRVEIITNDQGNRITPSYVAFTPWGESDLKKDAKHLPFKLVEKNGKPAIQVTVNGEKKVFTPEEVSAMVLQKMKETAEAYLGHKVTHAVVTVPAYFNDAQRQATKDAGTIAGLNVLRIVNEPTAAAIAYGLDKKDGESQIIVYDLGGGTFDVSLLSIDSGVFEVLATAGDTHLGGEDFDNRVSEYILKQFKKKTGLDASSNKRSVGKLKREVERAKRTLSSQMSTKIEIDGFFEGNDLDETLTRAKFEELNMDLFRKTMKPVEQVLKDAGVKKDEIDDVVLVGGSTRIPKVQAMLKEYFGREPSKGINPDEAVAWGAAVQGGVLAGDESLGDVVLIDVNPLTLGIETNGGVMTKLIPRNTVVPTKKSQIFSTAADNQNTVLIQVFEGERSMTKDNNLLGKFELTGIPPAPRGTPQIEVTFELDANGIMKVSAADKGTGKSESITISNDKGRLTPEEIERMVAEAEEFAEQDEAVRKRIEALNNLQNFIASLRSQLSDKEGLGGKLDKEDKETIKQSLKDAEAWLDENSQTAEGSDIEEQLSELQAAVAPITAKIYQGGAAAGGDDEPLNYGHDEL</sequence>
<evidence type="ECO:0000250" key="1">
    <source>
        <dbReference type="UniProtKB" id="P11021"/>
    </source>
</evidence>
<evidence type="ECO:0000250" key="2">
    <source>
        <dbReference type="UniProtKB" id="P16474"/>
    </source>
</evidence>
<evidence type="ECO:0000255" key="3">
    <source>
        <dbReference type="PROSITE-ProRule" id="PRU10138"/>
    </source>
</evidence>
<evidence type="ECO:0000269" key="4">
    <source>
    </source>
</evidence>
<evidence type="ECO:0000303" key="5">
    <source>
    </source>
</evidence>
<evidence type="ECO:0000305" key="6"/>